<name>BIOB_SHEPC</name>
<feature type="chain" id="PRO_0000381623" description="Biotin synthase">
    <location>
        <begin position="1"/>
        <end position="350"/>
    </location>
</feature>
<feature type="domain" description="Radical SAM core" evidence="2">
    <location>
        <begin position="41"/>
        <end position="268"/>
    </location>
</feature>
<feature type="binding site" evidence="1">
    <location>
        <position position="56"/>
    </location>
    <ligand>
        <name>[4Fe-4S] cluster</name>
        <dbReference type="ChEBI" id="CHEBI:49883"/>
        <note>4Fe-4S-S-AdoMet</note>
    </ligand>
</feature>
<feature type="binding site" evidence="1">
    <location>
        <position position="60"/>
    </location>
    <ligand>
        <name>[4Fe-4S] cluster</name>
        <dbReference type="ChEBI" id="CHEBI:49883"/>
        <note>4Fe-4S-S-AdoMet</note>
    </ligand>
</feature>
<feature type="binding site" evidence="1">
    <location>
        <position position="63"/>
    </location>
    <ligand>
        <name>[4Fe-4S] cluster</name>
        <dbReference type="ChEBI" id="CHEBI:49883"/>
        <note>4Fe-4S-S-AdoMet</note>
    </ligand>
</feature>
<feature type="binding site" evidence="1">
    <location>
        <position position="100"/>
    </location>
    <ligand>
        <name>[2Fe-2S] cluster</name>
        <dbReference type="ChEBI" id="CHEBI:190135"/>
    </ligand>
</feature>
<feature type="binding site" evidence="1">
    <location>
        <position position="131"/>
    </location>
    <ligand>
        <name>[2Fe-2S] cluster</name>
        <dbReference type="ChEBI" id="CHEBI:190135"/>
    </ligand>
</feature>
<feature type="binding site" evidence="1">
    <location>
        <position position="191"/>
    </location>
    <ligand>
        <name>[2Fe-2S] cluster</name>
        <dbReference type="ChEBI" id="CHEBI:190135"/>
    </ligand>
</feature>
<feature type="binding site" evidence="1">
    <location>
        <position position="263"/>
    </location>
    <ligand>
        <name>[2Fe-2S] cluster</name>
        <dbReference type="ChEBI" id="CHEBI:190135"/>
    </ligand>
</feature>
<dbReference type="EC" id="2.8.1.6" evidence="1"/>
<dbReference type="EMBL" id="CP000681">
    <property type="protein sequence ID" value="ABP76066.1"/>
    <property type="molecule type" value="Genomic_DNA"/>
</dbReference>
<dbReference type="SMR" id="A4Y7Y3"/>
<dbReference type="STRING" id="319224.Sputcn32_2345"/>
<dbReference type="KEGG" id="spc:Sputcn32_2345"/>
<dbReference type="eggNOG" id="COG0502">
    <property type="taxonomic scope" value="Bacteria"/>
</dbReference>
<dbReference type="HOGENOM" id="CLU_033172_1_2_6"/>
<dbReference type="UniPathway" id="UPA00078">
    <property type="reaction ID" value="UER00162"/>
</dbReference>
<dbReference type="GO" id="GO:0051537">
    <property type="term" value="F:2 iron, 2 sulfur cluster binding"/>
    <property type="evidence" value="ECO:0007669"/>
    <property type="project" value="UniProtKB-KW"/>
</dbReference>
<dbReference type="GO" id="GO:0051539">
    <property type="term" value="F:4 iron, 4 sulfur cluster binding"/>
    <property type="evidence" value="ECO:0007669"/>
    <property type="project" value="UniProtKB-KW"/>
</dbReference>
<dbReference type="GO" id="GO:0004076">
    <property type="term" value="F:biotin synthase activity"/>
    <property type="evidence" value="ECO:0007669"/>
    <property type="project" value="UniProtKB-UniRule"/>
</dbReference>
<dbReference type="GO" id="GO:0005506">
    <property type="term" value="F:iron ion binding"/>
    <property type="evidence" value="ECO:0007669"/>
    <property type="project" value="UniProtKB-UniRule"/>
</dbReference>
<dbReference type="GO" id="GO:0009102">
    <property type="term" value="P:biotin biosynthetic process"/>
    <property type="evidence" value="ECO:0007669"/>
    <property type="project" value="UniProtKB-UniRule"/>
</dbReference>
<dbReference type="CDD" id="cd01335">
    <property type="entry name" value="Radical_SAM"/>
    <property type="match status" value="1"/>
</dbReference>
<dbReference type="FunFam" id="3.20.20.70:FF:000011">
    <property type="entry name" value="Biotin synthase"/>
    <property type="match status" value="1"/>
</dbReference>
<dbReference type="Gene3D" id="3.20.20.70">
    <property type="entry name" value="Aldolase class I"/>
    <property type="match status" value="1"/>
</dbReference>
<dbReference type="HAMAP" id="MF_01694">
    <property type="entry name" value="BioB"/>
    <property type="match status" value="1"/>
</dbReference>
<dbReference type="InterPro" id="IPR013785">
    <property type="entry name" value="Aldolase_TIM"/>
</dbReference>
<dbReference type="InterPro" id="IPR010722">
    <property type="entry name" value="BATS_dom"/>
</dbReference>
<dbReference type="InterPro" id="IPR002684">
    <property type="entry name" value="Biotin_synth/BioAB"/>
</dbReference>
<dbReference type="InterPro" id="IPR024177">
    <property type="entry name" value="Biotin_synthase"/>
</dbReference>
<dbReference type="InterPro" id="IPR006638">
    <property type="entry name" value="Elp3/MiaA/NifB-like_rSAM"/>
</dbReference>
<dbReference type="InterPro" id="IPR007197">
    <property type="entry name" value="rSAM"/>
</dbReference>
<dbReference type="NCBIfam" id="TIGR00433">
    <property type="entry name" value="bioB"/>
    <property type="match status" value="1"/>
</dbReference>
<dbReference type="PANTHER" id="PTHR22976">
    <property type="entry name" value="BIOTIN SYNTHASE"/>
    <property type="match status" value="1"/>
</dbReference>
<dbReference type="PANTHER" id="PTHR22976:SF2">
    <property type="entry name" value="BIOTIN SYNTHASE, MITOCHONDRIAL"/>
    <property type="match status" value="1"/>
</dbReference>
<dbReference type="Pfam" id="PF06968">
    <property type="entry name" value="BATS"/>
    <property type="match status" value="1"/>
</dbReference>
<dbReference type="Pfam" id="PF04055">
    <property type="entry name" value="Radical_SAM"/>
    <property type="match status" value="1"/>
</dbReference>
<dbReference type="PIRSF" id="PIRSF001619">
    <property type="entry name" value="Biotin_synth"/>
    <property type="match status" value="1"/>
</dbReference>
<dbReference type="SFLD" id="SFLDF00272">
    <property type="entry name" value="biotin_synthase"/>
    <property type="match status" value="1"/>
</dbReference>
<dbReference type="SFLD" id="SFLDS00029">
    <property type="entry name" value="Radical_SAM"/>
    <property type="match status" value="1"/>
</dbReference>
<dbReference type="SMART" id="SM00876">
    <property type="entry name" value="BATS"/>
    <property type="match status" value="1"/>
</dbReference>
<dbReference type="SMART" id="SM00729">
    <property type="entry name" value="Elp3"/>
    <property type="match status" value="1"/>
</dbReference>
<dbReference type="SUPFAM" id="SSF102114">
    <property type="entry name" value="Radical SAM enzymes"/>
    <property type="match status" value="1"/>
</dbReference>
<dbReference type="PROSITE" id="PS51918">
    <property type="entry name" value="RADICAL_SAM"/>
    <property type="match status" value="1"/>
</dbReference>
<proteinExistence type="inferred from homology"/>
<gene>
    <name evidence="1" type="primary">bioB</name>
    <name type="ordered locus">Sputcn32_2345</name>
</gene>
<keyword id="KW-0001">2Fe-2S</keyword>
<keyword id="KW-0004">4Fe-4S</keyword>
<keyword id="KW-0093">Biotin biosynthesis</keyword>
<keyword id="KW-0408">Iron</keyword>
<keyword id="KW-0411">Iron-sulfur</keyword>
<keyword id="KW-0479">Metal-binding</keyword>
<keyword id="KW-0949">S-adenosyl-L-methionine</keyword>
<keyword id="KW-0808">Transferase</keyword>
<protein>
    <recommendedName>
        <fullName evidence="1">Biotin synthase</fullName>
        <ecNumber evidence="1">2.8.1.6</ecNumber>
    </recommendedName>
</protein>
<organism>
    <name type="scientific">Shewanella putrefaciens (strain CN-32 / ATCC BAA-453)</name>
    <dbReference type="NCBI Taxonomy" id="319224"/>
    <lineage>
        <taxon>Bacteria</taxon>
        <taxon>Pseudomonadati</taxon>
        <taxon>Pseudomonadota</taxon>
        <taxon>Gammaproteobacteria</taxon>
        <taxon>Alteromonadales</taxon>
        <taxon>Shewanellaceae</taxon>
        <taxon>Shewanella</taxon>
    </lineage>
</organism>
<reference key="1">
    <citation type="submission" date="2007-04" db="EMBL/GenBank/DDBJ databases">
        <title>Complete sequence of Shewanella putrefaciens CN-32.</title>
        <authorList>
            <consortium name="US DOE Joint Genome Institute"/>
            <person name="Copeland A."/>
            <person name="Lucas S."/>
            <person name="Lapidus A."/>
            <person name="Barry K."/>
            <person name="Detter J.C."/>
            <person name="Glavina del Rio T."/>
            <person name="Hammon N."/>
            <person name="Israni S."/>
            <person name="Dalin E."/>
            <person name="Tice H."/>
            <person name="Pitluck S."/>
            <person name="Chain P."/>
            <person name="Malfatti S."/>
            <person name="Shin M."/>
            <person name="Vergez L."/>
            <person name="Schmutz J."/>
            <person name="Larimer F."/>
            <person name="Land M."/>
            <person name="Hauser L."/>
            <person name="Kyrpides N."/>
            <person name="Mikhailova N."/>
            <person name="Romine M.F."/>
            <person name="Fredrickson J."/>
            <person name="Tiedje J."/>
            <person name="Richardson P."/>
        </authorList>
    </citation>
    <scope>NUCLEOTIDE SEQUENCE [LARGE SCALE GENOMIC DNA]</scope>
    <source>
        <strain>CN-32 / ATCC BAA-453</strain>
    </source>
</reference>
<accession>A4Y7Y3</accession>
<comment type="function">
    <text evidence="1">Catalyzes the conversion of dethiobiotin (DTB) to biotin by the insertion of a sulfur atom into dethiobiotin via a radical-based mechanism.</text>
</comment>
<comment type="catalytic activity">
    <reaction evidence="1">
        <text>(4R,5S)-dethiobiotin + (sulfur carrier)-SH + 2 reduced [2Fe-2S]-[ferredoxin] + 2 S-adenosyl-L-methionine = (sulfur carrier)-H + biotin + 2 5'-deoxyadenosine + 2 L-methionine + 2 oxidized [2Fe-2S]-[ferredoxin]</text>
        <dbReference type="Rhea" id="RHEA:22060"/>
        <dbReference type="Rhea" id="RHEA-COMP:10000"/>
        <dbReference type="Rhea" id="RHEA-COMP:10001"/>
        <dbReference type="Rhea" id="RHEA-COMP:14737"/>
        <dbReference type="Rhea" id="RHEA-COMP:14739"/>
        <dbReference type="ChEBI" id="CHEBI:17319"/>
        <dbReference type="ChEBI" id="CHEBI:29917"/>
        <dbReference type="ChEBI" id="CHEBI:33737"/>
        <dbReference type="ChEBI" id="CHEBI:33738"/>
        <dbReference type="ChEBI" id="CHEBI:57586"/>
        <dbReference type="ChEBI" id="CHEBI:57844"/>
        <dbReference type="ChEBI" id="CHEBI:59789"/>
        <dbReference type="ChEBI" id="CHEBI:64428"/>
        <dbReference type="ChEBI" id="CHEBI:149473"/>
        <dbReference type="EC" id="2.8.1.6"/>
    </reaction>
</comment>
<comment type="cofactor">
    <cofactor evidence="1">
        <name>[4Fe-4S] cluster</name>
        <dbReference type="ChEBI" id="CHEBI:49883"/>
    </cofactor>
    <text evidence="1">Binds 1 [4Fe-4S] cluster. The cluster is coordinated with 3 cysteines and an exchangeable S-adenosyl-L-methionine.</text>
</comment>
<comment type="cofactor">
    <cofactor evidence="1">
        <name>[2Fe-2S] cluster</name>
        <dbReference type="ChEBI" id="CHEBI:190135"/>
    </cofactor>
    <text evidence="1">Binds 1 [2Fe-2S] cluster. The cluster is coordinated with 3 cysteines and 1 arginine.</text>
</comment>
<comment type="pathway">
    <text evidence="1">Cofactor biosynthesis; biotin biosynthesis; biotin from 7,8-diaminononanoate: step 2/2.</text>
</comment>
<comment type="subunit">
    <text evidence="1">Homodimer.</text>
</comment>
<comment type="similarity">
    <text evidence="1">Belongs to the radical SAM superfamily. Biotin synthase family.</text>
</comment>
<sequence>MSQLQVRHDWKREEIEALFALPMNDLLFKAHSIHREVYDPNEVQISRLLSIKTGACPEDCKYCPQSARYDTGLEKERLLAMETVLTEARSAKAAGASRFCMGAAWRNPKEKDMPYLKQMVQEVKALGMETCMTLGMLSAEQANELADAGLDYYNHNLDTSPEYYGDVITTRTYQNRLDTLTHVRASGMKVCSGGIVGMGEKATDRAGLLQQLANLPQHPDSVPINMLVKVAGTPFEKLDDLDPLEFVRTIAVARILMPLSRVRLSAGRENMSDELQAMCFFAGANSIFYGCKLLTTPNPEESDDMGLFRRLGLRPEQGAVATLDDEQAVLAKAAAHQDKSTAQFYDAAAL</sequence>
<evidence type="ECO:0000255" key="1">
    <source>
        <dbReference type="HAMAP-Rule" id="MF_01694"/>
    </source>
</evidence>
<evidence type="ECO:0000255" key="2">
    <source>
        <dbReference type="PROSITE-ProRule" id="PRU01266"/>
    </source>
</evidence>